<name>MYB1_ACTCC</name>
<organism>
    <name type="scientific">Actinidia chinensis var. chinensis</name>
    <name type="common">Chinese soft-hair kiwi</name>
    <dbReference type="NCBI Taxonomy" id="1590841"/>
    <lineage>
        <taxon>Eukaryota</taxon>
        <taxon>Viridiplantae</taxon>
        <taxon>Streptophyta</taxon>
        <taxon>Embryophyta</taxon>
        <taxon>Tracheophyta</taxon>
        <taxon>Spermatophyta</taxon>
        <taxon>Magnoliopsida</taxon>
        <taxon>eudicotyledons</taxon>
        <taxon>Gunneridae</taxon>
        <taxon>Pentapetalae</taxon>
        <taxon>asterids</taxon>
        <taxon>Ericales</taxon>
        <taxon>Actinidiaceae</taxon>
        <taxon>Actinidia</taxon>
    </lineage>
</organism>
<dbReference type="EMBL" id="KF157390">
    <property type="protein sequence ID" value="AGV53045.1"/>
    <property type="molecule type" value="mRNA"/>
</dbReference>
<dbReference type="EMBL" id="MH370827">
    <property type="protein sequence ID" value="AYJ72555.1"/>
    <property type="molecule type" value="mRNA"/>
</dbReference>
<dbReference type="EMBL" id="KX349735">
    <property type="protein sequence ID" value="APZ74276.1"/>
    <property type="molecule type" value="mRNA"/>
</dbReference>
<dbReference type="EMBL" id="MG581953">
    <property type="protein sequence ID" value="AXP34755.1"/>
    <property type="molecule type" value="mRNA"/>
</dbReference>
<dbReference type="EMBL" id="NKQK01000001">
    <property type="protein sequence ID" value="PSS35990.1"/>
    <property type="molecule type" value="Genomic_DNA"/>
</dbReference>
<dbReference type="SMR" id="A0A2R6S148"/>
<dbReference type="FunCoup" id="A0A2R6S148">
    <property type="interactions" value="7"/>
</dbReference>
<dbReference type="STRING" id="1590841.A0A2R6S148"/>
<dbReference type="EnsemblPlants" id="PSS35990">
    <property type="protein sequence ID" value="PSS35990"/>
    <property type="gene ID" value="CEY00_Acc00493"/>
</dbReference>
<dbReference type="Gramene" id="PSS35990">
    <property type="protein sequence ID" value="PSS35990"/>
    <property type="gene ID" value="CEY00_Acc00493"/>
</dbReference>
<dbReference type="InParanoid" id="A0A2R6S148"/>
<dbReference type="OrthoDB" id="2143914at2759"/>
<dbReference type="Proteomes" id="UP000241394">
    <property type="component" value="Chromosome LG1"/>
</dbReference>
<dbReference type="GO" id="GO:0005634">
    <property type="term" value="C:nucleus"/>
    <property type="evidence" value="ECO:0000314"/>
    <property type="project" value="UniProtKB"/>
</dbReference>
<dbReference type="GO" id="GO:0003677">
    <property type="term" value="F:DNA binding"/>
    <property type="evidence" value="ECO:0007669"/>
    <property type="project" value="UniProtKB-KW"/>
</dbReference>
<dbReference type="GO" id="GO:0031542">
    <property type="term" value="P:positive regulation of anthocyanin biosynthetic process"/>
    <property type="evidence" value="ECO:0000314"/>
    <property type="project" value="UniProtKB"/>
</dbReference>
<dbReference type="GO" id="GO:0045893">
    <property type="term" value="P:positive regulation of DNA-templated transcription"/>
    <property type="evidence" value="ECO:0000314"/>
    <property type="project" value="UniProtKB"/>
</dbReference>
<dbReference type="CDD" id="cd00167">
    <property type="entry name" value="SANT"/>
    <property type="match status" value="2"/>
</dbReference>
<dbReference type="FunFam" id="1.10.10.60:FF:000218">
    <property type="entry name" value="Myb transcription factor"/>
    <property type="match status" value="1"/>
</dbReference>
<dbReference type="Gene3D" id="1.10.10.60">
    <property type="entry name" value="Homeodomain-like"/>
    <property type="match status" value="2"/>
</dbReference>
<dbReference type="InterPro" id="IPR009057">
    <property type="entry name" value="Homeodomain-like_sf"/>
</dbReference>
<dbReference type="InterPro" id="IPR017930">
    <property type="entry name" value="Myb_dom"/>
</dbReference>
<dbReference type="InterPro" id="IPR015495">
    <property type="entry name" value="Myb_TF_plants"/>
</dbReference>
<dbReference type="InterPro" id="IPR001005">
    <property type="entry name" value="SANT/Myb"/>
</dbReference>
<dbReference type="PANTHER" id="PTHR47999">
    <property type="entry name" value="TRANSCRIPTION FACTOR MYB8-RELATED-RELATED"/>
    <property type="match status" value="1"/>
</dbReference>
<dbReference type="PANTHER" id="PTHR47999:SF24">
    <property type="entry name" value="TRANSCRIPTION FACTOR MYB90"/>
    <property type="match status" value="1"/>
</dbReference>
<dbReference type="Pfam" id="PF00249">
    <property type="entry name" value="Myb_DNA-binding"/>
    <property type="match status" value="2"/>
</dbReference>
<dbReference type="SMART" id="SM00717">
    <property type="entry name" value="SANT"/>
    <property type="match status" value="2"/>
</dbReference>
<dbReference type="SUPFAM" id="SSF46689">
    <property type="entry name" value="Homeodomain-like"/>
    <property type="match status" value="1"/>
</dbReference>
<dbReference type="PROSITE" id="PS51294">
    <property type="entry name" value="HTH_MYB"/>
    <property type="match status" value="2"/>
</dbReference>
<feature type="chain" id="PRO_0000448058" description="Transcription factor MYB1">
    <location>
        <begin position="1"/>
        <end position="221"/>
    </location>
</feature>
<feature type="domain" description="HTH myb-type 1" evidence="1">
    <location>
        <begin position="1"/>
        <end position="57"/>
    </location>
</feature>
<feature type="domain" description="HTH myb-type 2" evidence="1">
    <location>
        <begin position="58"/>
        <end position="112"/>
    </location>
</feature>
<feature type="DNA-binding region" description="H-T-H motif" evidence="1">
    <location>
        <begin position="33"/>
        <end position="57"/>
    </location>
</feature>
<feature type="DNA-binding region" description="H-T-H motif" evidence="1">
    <location>
        <begin position="85"/>
        <end position="108"/>
    </location>
</feature>
<feature type="region of interest" description="Disordered" evidence="2">
    <location>
        <begin position="126"/>
        <end position="154"/>
    </location>
</feature>
<feature type="sequence conflict" description="In Ref. 1; AGV53045." evidence="11" ref="1">
    <original>E</original>
    <variation>G</variation>
    <location>
        <position position="17"/>
    </location>
</feature>
<feature type="sequence conflict" description="In Ref. 2; AYJ72555." evidence="11" ref="2">
    <original>Y</original>
    <variation>S</variation>
    <location>
        <position position="115"/>
    </location>
</feature>
<feature type="sequence conflict" description="In Ref. 2; AYJ72555." evidence="11" ref="2">
    <original>Q</original>
    <variation>E</variation>
    <location>
        <position position="119"/>
    </location>
</feature>
<feature type="sequence conflict" description="In Ref. 2; AYJ72555 and 1; AGV53045." evidence="11" ref="2 1">
    <original>A</original>
    <variation>P</variation>
    <location>
        <position position="192"/>
    </location>
</feature>
<feature type="sequence conflict" description="In Ref. 2; AYJ72555 and 3; APZ74276." evidence="11" ref="2 3">
    <original>W</original>
    <variation>R</variation>
    <location>
        <position position="215"/>
    </location>
</feature>
<proteinExistence type="evidence at transcript level"/>
<gene>
    <name evidence="7" type="primary">MYB1</name>
    <name evidence="10" type="synonym">MYB10</name>
    <name evidence="9" type="synonym">MYB75</name>
    <name evidence="8" type="synonym">MYBF110</name>
    <name evidence="12" type="ORF">CEY00_Acc00493</name>
</gene>
<comment type="function">
    <text evidence="4 5 6">Transcription activator involved in the regulation of anthocyanin biosynthesis in red-fleshed kiwifruit varieties (PubMed:28919902, PubMed:29203778, PubMed:30912865). Activates the transcription of genes involved in anthocyanin biosynthesis, such as dihydroflavonol reductase (DFR), anthocyanidin synthase (ANS) and UDP flavonoid glycosyltransferase (UFGT) (PubMed:28919902, PubMed:29203778, PubMed:30912865).</text>
</comment>
<comment type="subcellular location">
    <subcellularLocation>
        <location evidence="1 4 5">Nucleus</location>
    </subcellularLocation>
</comment>
<comment type="tissue specificity">
    <text evidence="3">Expressed in stems and leaves (PubMed:25143057). Expressed at low levels in ovaries (PubMed:25143057).</text>
</comment>
<comment type="developmental stage">
    <text evidence="3">Expressed in the inner pericarp of developing fruit at 117 days after flowering (DAF).</text>
</comment>
<reference key="1">
    <citation type="journal article" date="2015" name="Physiol. Plantarum">
        <title>High-temperature inhibition of biosynthesis and transportation of anthocyanins results in the poor red coloration in red-fleshed Actinidia chinensis.</title>
        <authorList>
            <person name="Man Y.P."/>
            <person name="Wang Y.C."/>
            <person name="Li Z.Z."/>
            <person name="Jiang Z.W."/>
            <person name="Yang H.L."/>
            <person name="Gong J.J."/>
            <person name="He S.S."/>
            <person name="Wu S.Q."/>
            <person name="Yang Z.Q."/>
            <person name="Zheng J."/>
            <person name="Wang Z.Y."/>
        </authorList>
    </citation>
    <scope>NUCLEOTIDE SEQUENCE [MRNA]</scope>
    <scope>TISSUE SPECIFICITY</scope>
    <scope>DEVELOPMENTAL STAGE</scope>
</reference>
<reference key="2">
    <citation type="journal article" date="2017" name="Front. Plant Sci.">
        <title>Expression differences of pigment structural genes and transcription factors explain flesh coloration in three contrasting kiwifruit cultivars.</title>
        <authorList>
            <person name="Liu Y."/>
            <person name="Zhou B."/>
            <person name="Qi Y."/>
            <person name="Chen X."/>
            <person name="Liu C."/>
            <person name="Liu Z."/>
            <person name="Ren X."/>
        </authorList>
    </citation>
    <scope>NUCLEOTIDE SEQUENCE [MRNA]</scope>
    <scope>FUNCTION</scope>
    <scope>SUBCELLULAR LOCATION</scope>
</reference>
<reference key="3">
    <citation type="journal article" date="2017" name="Sci. Rep.">
        <title>Kiwifruit R2R3-MYB transcription factors and contribution of the novel AcMYB75 to red kiwifruit anthocyanin biosynthesis.</title>
        <authorList>
            <person name="Li W."/>
            <person name="Ding Z."/>
            <person name="Ruan M."/>
            <person name="Yu X."/>
            <person name="Peng M."/>
            <person name="Liu Y."/>
        </authorList>
    </citation>
    <scope>NUCLEOTIDE SEQUENCE [MRNA]</scope>
    <scope>FUNCTION</scope>
    <scope>SUBCELLULAR LOCATION</scope>
</reference>
<reference key="4">
    <citation type="journal article" date="2019" name="New Phytol.">
        <title>A kiwifruit (Actinidia deliciosa) R2R3-MYB transcription factor modulates chlorophyll and carotenoid accumulation.</title>
        <authorList>
            <person name="Ampomah-Dwamena C."/>
            <person name="Thrimawithana A.H."/>
            <person name="Dejnoprat S."/>
            <person name="Lewis D."/>
            <person name="Espley R.V."/>
            <person name="Allan A.C."/>
        </authorList>
    </citation>
    <scope>NUCLEOTIDE SEQUENCE [MRNA]</scope>
</reference>
<reference key="5">
    <citation type="journal article" date="2018" name="BMC Genomics">
        <title>A manually annotated Actinidia chinensis var. chinensis (kiwifruit) genome highlights the challenges associated with draft genomes and gene prediction in plants.</title>
        <authorList>
            <person name="Pilkington S.M."/>
            <person name="Crowhurst R."/>
            <person name="Hilario E."/>
            <person name="Nardozza S."/>
            <person name="Fraser L."/>
            <person name="Peng Y."/>
            <person name="Gunaseelan K."/>
            <person name="Simpson R."/>
            <person name="Tahir J."/>
            <person name="Deroles S.C."/>
            <person name="Templeton K."/>
            <person name="Luo Z."/>
            <person name="Davy M."/>
            <person name="Cheng C."/>
            <person name="McNeilage M."/>
            <person name="Scaglione D."/>
            <person name="Liu Y."/>
            <person name="Zhang Q."/>
            <person name="Datson P."/>
            <person name="De Silva N."/>
            <person name="Gardiner S.E."/>
            <person name="Bassett H."/>
            <person name="Chagne D."/>
            <person name="McCallum J."/>
            <person name="Dzierzon H."/>
            <person name="Deng C."/>
            <person name="Wang Y.Y."/>
            <person name="Barron L."/>
            <person name="Manako K."/>
            <person name="Bowen J."/>
            <person name="Foster T.M."/>
            <person name="Erridge Z.A."/>
            <person name="Tiffin H."/>
            <person name="Waite C.N."/>
            <person name="Davies K.M."/>
            <person name="Grierson E.P."/>
            <person name="Laing W.A."/>
            <person name="Kirk R."/>
            <person name="Chen X."/>
            <person name="Wood M."/>
            <person name="Montefiori M."/>
            <person name="Brummell D.A."/>
            <person name="Schwinn K.E."/>
            <person name="Catanach A."/>
            <person name="Fullerton C."/>
            <person name="Li D."/>
            <person name="Meiyalaghan S."/>
            <person name="Nieuwenhuizen N."/>
            <person name="Read N."/>
            <person name="Prakash R."/>
            <person name="Hunter D."/>
            <person name="Zhang H."/>
            <person name="McKenzie M."/>
            <person name="Knabel M."/>
            <person name="Harris A."/>
            <person name="Allan A.C."/>
            <person name="Gleave A."/>
            <person name="Chen A."/>
            <person name="Janssen B.J."/>
            <person name="Plunkett B."/>
            <person name="Ampomah-Dwamena C."/>
            <person name="Voogd C."/>
            <person name="Leif D."/>
            <person name="Lafferty D."/>
            <person name="Souleyre E.J.F."/>
            <person name="Varkonyi-Gasic E."/>
            <person name="Gambi F."/>
            <person name="Hanley J."/>
            <person name="Yao J.L."/>
            <person name="Cheung J."/>
            <person name="David K.M."/>
            <person name="Warren B."/>
            <person name="Marsh K."/>
            <person name="Snowden K.C."/>
            <person name="Lin-Wang K."/>
            <person name="Brian L."/>
            <person name="Martinez-Sanchez M."/>
            <person name="Wang M."/>
            <person name="Ileperuma N."/>
            <person name="Macnee N."/>
            <person name="Campin R."/>
            <person name="McAtee P."/>
            <person name="Drummond R.S.M."/>
            <person name="Espley R.V."/>
            <person name="Ireland H.S."/>
            <person name="Wu R."/>
            <person name="Atkinson R.G."/>
            <person name="Karunairetnam S."/>
            <person name="Bulley S."/>
            <person name="Chunkath S."/>
            <person name="Hanley Z."/>
            <person name="Storey R."/>
            <person name="Thrimawithana A.H."/>
            <person name="Thomson S."/>
            <person name="David C."/>
            <person name="Testolin R."/>
            <person name="Huang H."/>
            <person name="Hellens R.P."/>
            <person name="Schaffer R.J."/>
        </authorList>
    </citation>
    <scope>NUCLEOTIDE SEQUENCE [LARGE SCALE GENOMIC DNA]</scope>
    <source>
        <strain>cv. Red5</strain>
    </source>
</reference>
<reference key="6">
    <citation type="journal article" date="2019" name="Plant J.">
        <title>A MYB/bHLH complex regulates tissue-specific anthocyanin biosynthesis in the inner pericarp of red-centered kiwifruit Actinidia chinensis cv. Hongyang.</title>
        <authorList>
            <person name="Wang L."/>
            <person name="Tang W."/>
            <person name="Hu Y."/>
            <person name="Zhang Y."/>
            <person name="Sun J."/>
            <person name="Guo X."/>
            <person name="Lu H."/>
            <person name="Yang Y."/>
            <person name="Fang C."/>
            <person name="Niu X."/>
            <person name="Yue J."/>
            <person name="Fei Z."/>
            <person name="Liu Y."/>
        </authorList>
    </citation>
    <scope>FUNCTION</scope>
</reference>
<sequence>MESVTLGVRKGAWTEEEDKLLKKCIEKYGEGKWHQVPLRSGLNRCRKSCRMRWLNYLRPNINRGNFTADEVDLIIRLHKLLGNRWSLIAGRLPGRTSNDVKNYWNTHLQKKLITYPRAQPIPKTQKTIVPKGTEAQPRAHPKSPPRPSPPSNNEILWWDNKTVSPQIDNIGIHWSIDGSIFEEPILGNLQSAGDSFLQQNQSDWSDIFLEDVNLWDLLGDD</sequence>
<accession>A0A2R6S148</accession>
<accession>A0A1P8VFB5</accession>
<accession>A0A346JM65</accession>
<accession>A0A3B8DH01</accession>
<accession>T2DL22</accession>
<keyword id="KW-0010">Activator</keyword>
<keyword id="KW-0238">DNA-binding</keyword>
<keyword id="KW-0539">Nucleus</keyword>
<keyword id="KW-1185">Reference proteome</keyword>
<keyword id="KW-0677">Repeat</keyword>
<keyword id="KW-0804">Transcription</keyword>
<keyword id="KW-0805">Transcription regulation</keyword>
<protein>
    <recommendedName>
        <fullName evidence="11">Transcription factor MYB1</fullName>
    </recommendedName>
    <alternativeName>
        <fullName evidence="11">Myb-related protein 1</fullName>
    </alternativeName>
</protein>
<evidence type="ECO:0000255" key="1">
    <source>
        <dbReference type="PROSITE-ProRule" id="PRU00625"/>
    </source>
</evidence>
<evidence type="ECO:0000256" key="2">
    <source>
        <dbReference type="SAM" id="MobiDB-lite"/>
    </source>
</evidence>
<evidence type="ECO:0000269" key="3">
    <source>
    </source>
</evidence>
<evidence type="ECO:0000269" key="4">
    <source>
    </source>
</evidence>
<evidence type="ECO:0000269" key="5">
    <source>
    </source>
</evidence>
<evidence type="ECO:0000269" key="6">
    <source>
    </source>
</evidence>
<evidence type="ECO:0000303" key="7">
    <source>
    </source>
</evidence>
<evidence type="ECO:0000303" key="8">
    <source>
    </source>
</evidence>
<evidence type="ECO:0000303" key="9">
    <source>
    </source>
</evidence>
<evidence type="ECO:0000303" key="10">
    <source>
    </source>
</evidence>
<evidence type="ECO:0000305" key="11"/>
<evidence type="ECO:0000312" key="12">
    <source>
        <dbReference type="EMBL" id="PSS35990.1"/>
    </source>
</evidence>